<keyword id="KW-0004">4Fe-4S</keyword>
<keyword id="KW-0028">Amino-acid biosynthesis</keyword>
<keyword id="KW-0198">Cysteine biosynthesis</keyword>
<keyword id="KW-0349">Heme</keyword>
<keyword id="KW-0408">Iron</keyword>
<keyword id="KW-0411">Iron-sulfur</keyword>
<keyword id="KW-0479">Metal-binding</keyword>
<keyword id="KW-0521">NADP</keyword>
<keyword id="KW-0560">Oxidoreductase</keyword>
<keyword id="KW-1185">Reference proteome</keyword>
<feature type="chain" id="PRO_0000388502" description="Sulfite reductase [NADPH] hemoprotein beta-component">
    <location>
        <begin position="1"/>
        <end position="576"/>
    </location>
</feature>
<feature type="region of interest" description="Disordered" evidence="2">
    <location>
        <begin position="1"/>
        <end position="25"/>
    </location>
</feature>
<feature type="compositionally biased region" description="Basic and acidic residues" evidence="2">
    <location>
        <begin position="1"/>
        <end position="12"/>
    </location>
</feature>
<feature type="binding site" evidence="1">
    <location>
        <position position="441"/>
    </location>
    <ligand>
        <name>[4Fe-4S] cluster</name>
        <dbReference type="ChEBI" id="CHEBI:49883"/>
    </ligand>
</feature>
<feature type="binding site" evidence="1">
    <location>
        <position position="447"/>
    </location>
    <ligand>
        <name>[4Fe-4S] cluster</name>
        <dbReference type="ChEBI" id="CHEBI:49883"/>
    </ligand>
</feature>
<feature type="binding site" evidence="1">
    <location>
        <position position="486"/>
    </location>
    <ligand>
        <name>[4Fe-4S] cluster</name>
        <dbReference type="ChEBI" id="CHEBI:49883"/>
    </ligand>
</feature>
<feature type="binding site" evidence="1">
    <location>
        <position position="490"/>
    </location>
    <ligand>
        <name>[4Fe-4S] cluster</name>
        <dbReference type="ChEBI" id="CHEBI:49883"/>
    </ligand>
</feature>
<feature type="binding site" description="axial binding residue" evidence="1">
    <location>
        <position position="490"/>
    </location>
    <ligand>
        <name>siroheme</name>
        <dbReference type="ChEBI" id="CHEBI:60052"/>
    </ligand>
    <ligandPart>
        <name>Fe</name>
        <dbReference type="ChEBI" id="CHEBI:18248"/>
    </ligandPart>
</feature>
<proteinExistence type="inferred from homology"/>
<gene>
    <name evidence="1" type="primary">cysI</name>
    <name type="ordered locus">Nham_0683</name>
</gene>
<reference key="1">
    <citation type="submission" date="2006-03" db="EMBL/GenBank/DDBJ databases">
        <title>Complete sequence of chromosome of Nitrobacter hamburgensis X14.</title>
        <authorList>
            <consortium name="US DOE Joint Genome Institute"/>
            <person name="Copeland A."/>
            <person name="Lucas S."/>
            <person name="Lapidus A."/>
            <person name="Barry K."/>
            <person name="Detter J.C."/>
            <person name="Glavina del Rio T."/>
            <person name="Hammon N."/>
            <person name="Israni S."/>
            <person name="Dalin E."/>
            <person name="Tice H."/>
            <person name="Pitluck S."/>
            <person name="Chain P."/>
            <person name="Malfatti S."/>
            <person name="Shin M."/>
            <person name="Vergez L."/>
            <person name="Schmutz J."/>
            <person name="Larimer F."/>
            <person name="Land M."/>
            <person name="Hauser L."/>
            <person name="Kyrpides N."/>
            <person name="Ivanova N."/>
            <person name="Ward B."/>
            <person name="Arp D."/>
            <person name="Klotz M."/>
            <person name="Stein L."/>
            <person name="O'Mullan G."/>
            <person name="Starkenburg S."/>
            <person name="Sayavedra L."/>
            <person name="Poret-Peterson A.T."/>
            <person name="Gentry M.E."/>
            <person name="Bruce D."/>
            <person name="Richardson P."/>
        </authorList>
    </citation>
    <scope>NUCLEOTIDE SEQUENCE [LARGE SCALE GENOMIC DNA]</scope>
    <source>
        <strain>DSM 10229 / NCIMB 13809 / X14</strain>
    </source>
</reference>
<protein>
    <recommendedName>
        <fullName evidence="1">Sulfite reductase [NADPH] hemoprotein beta-component</fullName>
        <shortName evidence="1">SiR-HP</shortName>
        <shortName evidence="1">SiRHP</shortName>
        <ecNumber evidence="1">1.8.1.2</ecNumber>
    </recommendedName>
</protein>
<sequence>MNVKTEPDRSRDVSQPLDKLGPDETLKANSDYLRGTIKQSLADEITAAVTANDAKLMKFFGIYQQDDRDIRDERRRQKLEAAFSFMVRVRLPGGVCSPSQWLKLDALGRAYGGDTLRLTTRQTFQLHRIMKHNMRAVIQGLRDVLLDTRAACGDDTRGVMCTVNPDLSKLHAEVYALAKQASDHAVHRTGAYQEIWYEAERQDTDGPEEPFYGRTYMPRKFKIGFAIPPSNDIDVYGQDLGFIAIARRGKLKGFNVAIGGGLGRTDQSPKTYPRLATVIGYIDADKLFPTIDAVMSVQRDYGDRLDRLHARFKYTIDEKGLDWIKAEAERRLGFALEPAQPYTFTSNGDPLGWVKGEDGREHCTLFIQNGRVINTPDHPMMDGLRAIAQVHKGMFRITPNQNLIISDIAPEDRPAIAALMKQYGLDQFETRSGLRLNSMACVALPTCGLAMAESERYLPDLVTKIEAILNVHGLKDDPITIRMTGCPNGCSRPYIAEIGLTGRAPGKYNLYLGGGFHGERLNKMYLENVGEGAILEALDKTLGHYARDRKPGEHFGDFAIRAGYVVEVKEGRFFND</sequence>
<name>CYSI_NITHX</name>
<accession>Q1QQC7</accession>
<organism>
    <name type="scientific">Nitrobacter hamburgensis (strain DSM 10229 / NCIMB 13809 / X14)</name>
    <dbReference type="NCBI Taxonomy" id="323097"/>
    <lineage>
        <taxon>Bacteria</taxon>
        <taxon>Pseudomonadati</taxon>
        <taxon>Pseudomonadota</taxon>
        <taxon>Alphaproteobacteria</taxon>
        <taxon>Hyphomicrobiales</taxon>
        <taxon>Nitrobacteraceae</taxon>
        <taxon>Nitrobacter</taxon>
    </lineage>
</organism>
<comment type="function">
    <text evidence="1">Component of the sulfite reductase complex that catalyzes the 6-electron reduction of sulfite to sulfide. This is one of several activities required for the biosynthesis of L-cysteine from sulfate.</text>
</comment>
<comment type="catalytic activity">
    <reaction evidence="1">
        <text>hydrogen sulfide + 3 NADP(+) + 3 H2O = sulfite + 3 NADPH + 4 H(+)</text>
        <dbReference type="Rhea" id="RHEA:13801"/>
        <dbReference type="ChEBI" id="CHEBI:15377"/>
        <dbReference type="ChEBI" id="CHEBI:15378"/>
        <dbReference type="ChEBI" id="CHEBI:17359"/>
        <dbReference type="ChEBI" id="CHEBI:29919"/>
        <dbReference type="ChEBI" id="CHEBI:57783"/>
        <dbReference type="ChEBI" id="CHEBI:58349"/>
        <dbReference type="EC" id="1.8.1.2"/>
    </reaction>
</comment>
<comment type="cofactor">
    <cofactor evidence="1">
        <name>siroheme</name>
        <dbReference type="ChEBI" id="CHEBI:60052"/>
    </cofactor>
    <text evidence="1">Binds 1 siroheme per subunit.</text>
</comment>
<comment type="cofactor">
    <cofactor evidence="1">
        <name>[4Fe-4S] cluster</name>
        <dbReference type="ChEBI" id="CHEBI:49883"/>
    </cofactor>
    <text evidence="1">Binds 1 [4Fe-4S] cluster per subunit.</text>
</comment>
<comment type="pathway">
    <text evidence="1">Sulfur metabolism; hydrogen sulfide biosynthesis; hydrogen sulfide from sulfite (NADPH route): step 1/1.</text>
</comment>
<comment type="subunit">
    <text evidence="1">Alpha(8)-beta(8). The alpha component is a flavoprotein, the beta component is a hemoprotein.</text>
</comment>
<comment type="similarity">
    <text evidence="1">Belongs to the nitrite and sulfite reductase 4Fe-4S domain family.</text>
</comment>
<dbReference type="EC" id="1.8.1.2" evidence="1"/>
<dbReference type="EMBL" id="CP000319">
    <property type="protein sequence ID" value="ABE61570.1"/>
    <property type="molecule type" value="Genomic_DNA"/>
</dbReference>
<dbReference type="RefSeq" id="WP_011509274.1">
    <property type="nucleotide sequence ID" value="NC_007964.1"/>
</dbReference>
<dbReference type="SMR" id="Q1QQC7"/>
<dbReference type="STRING" id="323097.Nham_0683"/>
<dbReference type="KEGG" id="nha:Nham_0683"/>
<dbReference type="eggNOG" id="COG0155">
    <property type="taxonomic scope" value="Bacteria"/>
</dbReference>
<dbReference type="HOGENOM" id="CLU_001975_3_2_5"/>
<dbReference type="OrthoDB" id="9803707at2"/>
<dbReference type="UniPathway" id="UPA00140">
    <property type="reaction ID" value="UER00207"/>
</dbReference>
<dbReference type="Proteomes" id="UP000001953">
    <property type="component" value="Chromosome"/>
</dbReference>
<dbReference type="GO" id="GO:0009337">
    <property type="term" value="C:sulfite reductase complex (NADPH)"/>
    <property type="evidence" value="ECO:0007669"/>
    <property type="project" value="InterPro"/>
</dbReference>
<dbReference type="GO" id="GO:0051539">
    <property type="term" value="F:4 iron, 4 sulfur cluster binding"/>
    <property type="evidence" value="ECO:0007669"/>
    <property type="project" value="UniProtKB-KW"/>
</dbReference>
<dbReference type="GO" id="GO:0020037">
    <property type="term" value="F:heme binding"/>
    <property type="evidence" value="ECO:0007669"/>
    <property type="project" value="InterPro"/>
</dbReference>
<dbReference type="GO" id="GO:0046872">
    <property type="term" value="F:metal ion binding"/>
    <property type="evidence" value="ECO:0007669"/>
    <property type="project" value="UniProtKB-KW"/>
</dbReference>
<dbReference type="GO" id="GO:0050661">
    <property type="term" value="F:NADP binding"/>
    <property type="evidence" value="ECO:0007669"/>
    <property type="project" value="InterPro"/>
</dbReference>
<dbReference type="GO" id="GO:0050311">
    <property type="term" value="F:sulfite reductase (ferredoxin) activity"/>
    <property type="evidence" value="ECO:0007669"/>
    <property type="project" value="TreeGrafter"/>
</dbReference>
<dbReference type="GO" id="GO:0004783">
    <property type="term" value="F:sulfite reductase (NADPH) activity"/>
    <property type="evidence" value="ECO:0007669"/>
    <property type="project" value="UniProtKB-UniRule"/>
</dbReference>
<dbReference type="GO" id="GO:0019344">
    <property type="term" value="P:cysteine biosynthetic process"/>
    <property type="evidence" value="ECO:0007669"/>
    <property type="project" value="UniProtKB-KW"/>
</dbReference>
<dbReference type="GO" id="GO:0070814">
    <property type="term" value="P:hydrogen sulfide biosynthetic process"/>
    <property type="evidence" value="ECO:0007669"/>
    <property type="project" value="UniProtKB-UniRule"/>
</dbReference>
<dbReference type="GO" id="GO:0000103">
    <property type="term" value="P:sulfate assimilation"/>
    <property type="evidence" value="ECO:0007669"/>
    <property type="project" value="UniProtKB-UniRule"/>
</dbReference>
<dbReference type="FunFam" id="3.30.413.10:FF:000003">
    <property type="entry name" value="Sulfite reductase [NADPH] hemoprotein beta-component"/>
    <property type="match status" value="1"/>
</dbReference>
<dbReference type="Gene3D" id="3.30.413.10">
    <property type="entry name" value="Sulfite Reductase Hemoprotein, domain 1"/>
    <property type="match status" value="2"/>
</dbReference>
<dbReference type="HAMAP" id="MF_01540">
    <property type="entry name" value="CysI"/>
    <property type="match status" value="1"/>
</dbReference>
<dbReference type="InterPro" id="IPR011786">
    <property type="entry name" value="CysI"/>
</dbReference>
<dbReference type="InterPro" id="IPR005117">
    <property type="entry name" value="NiRdtase/SiRdtase_haem-b_fer"/>
</dbReference>
<dbReference type="InterPro" id="IPR036136">
    <property type="entry name" value="Nit/Sulf_reduc_fer-like_dom_sf"/>
</dbReference>
<dbReference type="InterPro" id="IPR006067">
    <property type="entry name" value="NO2/SO3_Rdtase_4Fe4S_dom"/>
</dbReference>
<dbReference type="InterPro" id="IPR045169">
    <property type="entry name" value="NO2/SO3_Rdtase_4Fe4S_prot"/>
</dbReference>
<dbReference type="InterPro" id="IPR045854">
    <property type="entry name" value="NO2/SO3_Rdtase_4Fe4S_sf"/>
</dbReference>
<dbReference type="InterPro" id="IPR006066">
    <property type="entry name" value="NO2/SO3_Rdtase_FeS/sirohaem_BS"/>
</dbReference>
<dbReference type="NCBIfam" id="TIGR02041">
    <property type="entry name" value="CysI"/>
    <property type="match status" value="1"/>
</dbReference>
<dbReference type="NCBIfam" id="NF010029">
    <property type="entry name" value="PRK13504.1"/>
    <property type="match status" value="1"/>
</dbReference>
<dbReference type="PANTHER" id="PTHR11493:SF47">
    <property type="entry name" value="SULFITE REDUCTASE [NADPH] SUBUNIT BETA"/>
    <property type="match status" value="1"/>
</dbReference>
<dbReference type="PANTHER" id="PTHR11493">
    <property type="entry name" value="SULFITE REDUCTASE [NADPH] SUBUNIT BETA-RELATED"/>
    <property type="match status" value="1"/>
</dbReference>
<dbReference type="Pfam" id="PF01077">
    <property type="entry name" value="NIR_SIR"/>
    <property type="match status" value="1"/>
</dbReference>
<dbReference type="Pfam" id="PF03460">
    <property type="entry name" value="NIR_SIR_ferr"/>
    <property type="match status" value="2"/>
</dbReference>
<dbReference type="PRINTS" id="PR00397">
    <property type="entry name" value="SIROHAEM"/>
</dbReference>
<dbReference type="SUPFAM" id="SSF56014">
    <property type="entry name" value="Nitrite and sulphite reductase 4Fe-4S domain-like"/>
    <property type="match status" value="2"/>
</dbReference>
<dbReference type="SUPFAM" id="SSF55124">
    <property type="entry name" value="Nitrite/Sulfite reductase N-terminal domain-like"/>
    <property type="match status" value="2"/>
</dbReference>
<dbReference type="PROSITE" id="PS00365">
    <property type="entry name" value="NIR_SIR"/>
    <property type="match status" value="1"/>
</dbReference>
<evidence type="ECO:0000255" key="1">
    <source>
        <dbReference type="HAMAP-Rule" id="MF_01540"/>
    </source>
</evidence>
<evidence type="ECO:0000256" key="2">
    <source>
        <dbReference type="SAM" id="MobiDB-lite"/>
    </source>
</evidence>